<protein>
    <recommendedName>
        <fullName evidence="1">Peptide deformylase 2</fullName>
        <shortName evidence="1">PDF 2</shortName>
        <ecNumber evidence="1">3.5.1.88</ecNumber>
    </recommendedName>
    <alternativeName>
        <fullName evidence="1">Polypeptide deformylase 2</fullName>
    </alternativeName>
</protein>
<feature type="chain" id="PRO_0000082880" description="Peptide deformylase 2">
    <location>
        <begin position="1"/>
        <end position="202"/>
    </location>
</feature>
<feature type="active site" evidence="1">
    <location>
        <position position="166"/>
    </location>
</feature>
<feature type="binding site" evidence="1">
    <location>
        <position position="123"/>
    </location>
    <ligand>
        <name>Fe cation</name>
        <dbReference type="ChEBI" id="CHEBI:24875"/>
    </ligand>
</feature>
<feature type="binding site" evidence="1">
    <location>
        <position position="165"/>
    </location>
    <ligand>
        <name>Fe cation</name>
        <dbReference type="ChEBI" id="CHEBI:24875"/>
    </ligand>
</feature>
<feature type="binding site" evidence="1">
    <location>
        <position position="169"/>
    </location>
    <ligand>
        <name>Fe cation</name>
        <dbReference type="ChEBI" id="CHEBI:24875"/>
    </ligand>
</feature>
<reference key="1">
    <citation type="journal article" date="2003" name="Genome Res.">
        <title>Comparative genome analysis of Vibrio vulnificus, a marine pathogen.</title>
        <authorList>
            <person name="Chen C.-Y."/>
            <person name="Wu K.-M."/>
            <person name="Chang Y.-C."/>
            <person name="Chang C.-H."/>
            <person name="Tsai H.-C."/>
            <person name="Liao T.-L."/>
            <person name="Liu Y.-M."/>
            <person name="Chen H.-J."/>
            <person name="Shen A.B.-T."/>
            <person name="Li J.-C."/>
            <person name="Su T.-L."/>
            <person name="Shao C.-P."/>
            <person name="Lee C.-T."/>
            <person name="Hor L.-I."/>
            <person name="Tsai S.-F."/>
        </authorList>
    </citation>
    <scope>NUCLEOTIDE SEQUENCE [LARGE SCALE GENOMIC DNA]</scope>
    <source>
        <strain>YJ016</strain>
    </source>
</reference>
<evidence type="ECO:0000255" key="1">
    <source>
        <dbReference type="HAMAP-Rule" id="MF_00163"/>
    </source>
</evidence>
<keyword id="KW-0378">Hydrolase</keyword>
<keyword id="KW-0408">Iron</keyword>
<keyword id="KW-0479">Metal-binding</keyword>
<keyword id="KW-0648">Protein biosynthesis</keyword>
<accession>Q7MGK6</accession>
<comment type="function">
    <text evidence="1">Removes the formyl group from the N-terminal Met of newly synthesized proteins. Requires at least a dipeptide for an efficient rate of reaction. N-terminal L-methionine is a prerequisite for activity but the enzyme has broad specificity at other positions.</text>
</comment>
<comment type="catalytic activity">
    <reaction evidence="1">
        <text>N-terminal N-formyl-L-methionyl-[peptide] + H2O = N-terminal L-methionyl-[peptide] + formate</text>
        <dbReference type="Rhea" id="RHEA:24420"/>
        <dbReference type="Rhea" id="RHEA-COMP:10639"/>
        <dbReference type="Rhea" id="RHEA-COMP:10640"/>
        <dbReference type="ChEBI" id="CHEBI:15377"/>
        <dbReference type="ChEBI" id="CHEBI:15740"/>
        <dbReference type="ChEBI" id="CHEBI:49298"/>
        <dbReference type="ChEBI" id="CHEBI:64731"/>
        <dbReference type="EC" id="3.5.1.88"/>
    </reaction>
</comment>
<comment type="cofactor">
    <cofactor evidence="1">
        <name>Fe(2+)</name>
        <dbReference type="ChEBI" id="CHEBI:29033"/>
    </cofactor>
    <text evidence="1">Binds 1 Fe(2+) ion.</text>
</comment>
<comment type="similarity">
    <text evidence="1">Belongs to the polypeptide deformylase family.</text>
</comment>
<proteinExistence type="inferred from homology"/>
<sequence>MLLGCCHLGYKMSRIEPTRFVLFRHSSTFRVHMSVLQVLTFPDDRLRTVAKPVEKVTPEIQKIVDDMIETMYDEEGIGLAATQVDIHQRIVVIDISESRNEPMVLINPEILEKRGEDGIEEGCLSVPGARALVPRAAEVTVKALDRDGHEFTLEADDLLAICIQHELDHLQGKLFVDYLSPLKRKRIQDKLAKIKRFNEKQR</sequence>
<dbReference type="EC" id="3.5.1.88" evidence="1"/>
<dbReference type="EMBL" id="BA000037">
    <property type="protein sequence ID" value="BAC95989.1"/>
    <property type="molecule type" value="Genomic_DNA"/>
</dbReference>
<dbReference type="SMR" id="Q7MGK6"/>
<dbReference type="STRING" id="672.VV93_v1c29470"/>
<dbReference type="KEGG" id="vvy:VV3225"/>
<dbReference type="eggNOG" id="COG0242">
    <property type="taxonomic scope" value="Bacteria"/>
</dbReference>
<dbReference type="HOGENOM" id="CLU_061901_2_1_6"/>
<dbReference type="Proteomes" id="UP000002675">
    <property type="component" value="Chromosome I"/>
</dbReference>
<dbReference type="GO" id="GO:0046872">
    <property type="term" value="F:metal ion binding"/>
    <property type="evidence" value="ECO:0007669"/>
    <property type="project" value="UniProtKB-KW"/>
</dbReference>
<dbReference type="GO" id="GO:0042586">
    <property type="term" value="F:peptide deformylase activity"/>
    <property type="evidence" value="ECO:0007669"/>
    <property type="project" value="UniProtKB-UniRule"/>
</dbReference>
<dbReference type="GO" id="GO:0043686">
    <property type="term" value="P:co-translational protein modification"/>
    <property type="evidence" value="ECO:0007669"/>
    <property type="project" value="TreeGrafter"/>
</dbReference>
<dbReference type="GO" id="GO:0006412">
    <property type="term" value="P:translation"/>
    <property type="evidence" value="ECO:0007669"/>
    <property type="project" value="UniProtKB-UniRule"/>
</dbReference>
<dbReference type="CDD" id="cd00487">
    <property type="entry name" value="Pep_deformylase"/>
    <property type="match status" value="1"/>
</dbReference>
<dbReference type="FunFam" id="3.90.45.10:FF:000001">
    <property type="entry name" value="Peptide deformylase"/>
    <property type="match status" value="1"/>
</dbReference>
<dbReference type="Gene3D" id="3.90.45.10">
    <property type="entry name" value="Peptide deformylase"/>
    <property type="match status" value="1"/>
</dbReference>
<dbReference type="HAMAP" id="MF_00163">
    <property type="entry name" value="Pep_deformylase"/>
    <property type="match status" value="1"/>
</dbReference>
<dbReference type="InterPro" id="IPR023635">
    <property type="entry name" value="Peptide_deformylase"/>
</dbReference>
<dbReference type="InterPro" id="IPR036821">
    <property type="entry name" value="Peptide_deformylase_sf"/>
</dbReference>
<dbReference type="NCBIfam" id="TIGR00079">
    <property type="entry name" value="pept_deformyl"/>
    <property type="match status" value="1"/>
</dbReference>
<dbReference type="NCBIfam" id="NF001159">
    <property type="entry name" value="PRK00150.1-3"/>
    <property type="match status" value="1"/>
</dbReference>
<dbReference type="PANTHER" id="PTHR10458">
    <property type="entry name" value="PEPTIDE DEFORMYLASE"/>
    <property type="match status" value="1"/>
</dbReference>
<dbReference type="PANTHER" id="PTHR10458:SF21">
    <property type="entry name" value="PEPTIDE DEFORMYLASE"/>
    <property type="match status" value="1"/>
</dbReference>
<dbReference type="Pfam" id="PF01327">
    <property type="entry name" value="Pep_deformylase"/>
    <property type="match status" value="1"/>
</dbReference>
<dbReference type="PIRSF" id="PIRSF004749">
    <property type="entry name" value="Pep_def"/>
    <property type="match status" value="1"/>
</dbReference>
<dbReference type="PRINTS" id="PR01576">
    <property type="entry name" value="PDEFORMYLASE"/>
</dbReference>
<dbReference type="SUPFAM" id="SSF56420">
    <property type="entry name" value="Peptide deformylase"/>
    <property type="match status" value="1"/>
</dbReference>
<name>DEF2_VIBVY</name>
<gene>
    <name evidence="1" type="primary">def2</name>
    <name type="ordered locus">VV3225</name>
</gene>
<organism>
    <name type="scientific">Vibrio vulnificus (strain YJ016)</name>
    <dbReference type="NCBI Taxonomy" id="196600"/>
    <lineage>
        <taxon>Bacteria</taxon>
        <taxon>Pseudomonadati</taxon>
        <taxon>Pseudomonadota</taxon>
        <taxon>Gammaproteobacteria</taxon>
        <taxon>Vibrionales</taxon>
        <taxon>Vibrionaceae</taxon>
        <taxon>Vibrio</taxon>
    </lineage>
</organism>